<sequence length="647" mass="70484">MEVAAGGGCGAGPPLLLSDSEQQCYSELFARCAGAASGGPGPGPPEATRVAPGTATAAAGPVADLFRASQLPPETLHQITELCGAKRVGYFGPTQFYVALKLIAAAQAGLPVRTESIKCELPLPRFVMSKNDGEIRFGNPAELHGPKVQIPYLTTEKNSFKRMDNEDKQETQSPTMSPLASPPSSPPHYQRVSLSHGYSKLRSGTEQMHPAPYERQPIGQPEGPSSEGPGAKPFRRQASLIRSFSVEREPQENNSNYPDEPWRITEEQREYYVNQFRSLQPDPSSFISGSVAKNFFTKSKLSIPELSYIWELSDADCDGALTLSEFCAAFHLIVARKNGYPLPEGLPPTLQPEYLQAAFPKSKWECAIFDSYSESMPANQQSCDLNRMEKTSVKDVADFPVPTQDVTTADDKQALKSTVNESLPKDVSEDTATSKDYNSLKARPRSRSYSSTSIEEAMKRGEDPPTPPPRPQKTHSRASSLDLNKVFLPSAPAANSGLLPPPPALPPRPCPTQSEPVSEADLHSQLNRAPSQAAESSPTKMDAPHAQPPSKPIRRKFRPENQTTESQEPAAAVGGAVSAAMVKPHPTVQKQSSKQKKAIQTAIRKNKEANAVLARLNSELQQQLKEVHQERIALENQLEQLRPVTVL</sequence>
<comment type="function">
    <text evidence="1">Involved in ligand-dependent receptor mediated endocytosis of the EGF and insulin receptors as part of the Ral signaling pathway (By similarity). By controlling growth factor receptors endocytosis may regulate cell survival (By similarity). Through ASAP1 may regulate cell adhesion and migration (By similarity).</text>
</comment>
<comment type="subunit">
    <text evidence="1 6">Interacts with EPN1 (By similarity). Interacts with EPS15 AND EPS15L1 (By similarity). Interacts with RALBP1; can form a ternary complex with activated Ral (RALA or RALB) (By similarity). Interacts with ASAP1; the interaction is direct and this complex can bind paxillin (PubMed:12149250). Also forms a ternary complex with RALBP1 and ASAP1 (By similarity). Interacts with GRB2 (By similarity).</text>
</comment>
<comment type="subcellular location">
    <subcellularLocation>
        <location evidence="1">Cytoplasm</location>
    </subcellularLocation>
</comment>
<comment type="PTM">
    <text evidence="1">Tyrosine-phosphorylated upon stimulation of cells with EGF. Phosphorylation on Tyr-residues induces its association with the EGF receptor probably indirectly through an adapter like GRB2.</text>
</comment>
<keyword id="KW-0106">Calcium</keyword>
<keyword id="KW-0175">Coiled coil</keyword>
<keyword id="KW-0963">Cytoplasm</keyword>
<keyword id="KW-0479">Metal-binding</keyword>
<keyword id="KW-0597">Phosphoprotein</keyword>
<keyword id="KW-1185">Reference proteome</keyword>
<keyword id="KW-0677">Repeat</keyword>
<organism>
    <name type="scientific">Mus musculus</name>
    <name type="common">Mouse</name>
    <dbReference type="NCBI Taxonomy" id="10090"/>
    <lineage>
        <taxon>Eukaryota</taxon>
        <taxon>Metazoa</taxon>
        <taxon>Chordata</taxon>
        <taxon>Craniata</taxon>
        <taxon>Vertebrata</taxon>
        <taxon>Euteleostomi</taxon>
        <taxon>Mammalia</taxon>
        <taxon>Eutheria</taxon>
        <taxon>Euarchontoglires</taxon>
        <taxon>Glires</taxon>
        <taxon>Rodentia</taxon>
        <taxon>Myomorpha</taxon>
        <taxon>Muroidea</taxon>
        <taxon>Muridae</taxon>
        <taxon>Murinae</taxon>
        <taxon>Mus</taxon>
        <taxon>Mus</taxon>
    </lineage>
</organism>
<reference key="1">
    <citation type="submission" date="2003-03" db="EMBL/GenBank/DDBJ databases">
        <title>Organization and annotation of the Xcat critical region and elimination of three candidate genes.</title>
        <authorList>
            <person name="Huang K.M."/>
            <person name="Geunes-Boyer S."/>
            <person name="Stambolian D."/>
            <person name="Dutra A."/>
            <person name="Favor J."/>
        </authorList>
    </citation>
    <scope>NUCLEOTIDE SEQUENCE [MRNA]</scope>
    <source>
        <strain>C57BL/6J</strain>
    </source>
</reference>
<reference key="2">
    <citation type="journal article" date="2009" name="PLoS Biol.">
        <title>Lineage-specific biology revealed by a finished genome assembly of the mouse.</title>
        <authorList>
            <person name="Church D.M."/>
            <person name="Goodstadt L."/>
            <person name="Hillier L.W."/>
            <person name="Zody M.C."/>
            <person name="Goldstein S."/>
            <person name="She X."/>
            <person name="Bult C.J."/>
            <person name="Agarwala R."/>
            <person name="Cherry J.L."/>
            <person name="DiCuccio M."/>
            <person name="Hlavina W."/>
            <person name="Kapustin Y."/>
            <person name="Meric P."/>
            <person name="Maglott D."/>
            <person name="Birtle Z."/>
            <person name="Marques A.C."/>
            <person name="Graves T."/>
            <person name="Zhou S."/>
            <person name="Teague B."/>
            <person name="Potamousis K."/>
            <person name="Churas C."/>
            <person name="Place M."/>
            <person name="Herschleb J."/>
            <person name="Runnheim R."/>
            <person name="Forrest D."/>
            <person name="Amos-Landgraf J."/>
            <person name="Schwartz D.C."/>
            <person name="Cheng Z."/>
            <person name="Lindblad-Toh K."/>
            <person name="Eichler E.E."/>
            <person name="Ponting C.P."/>
        </authorList>
    </citation>
    <scope>NUCLEOTIDE SEQUENCE [LARGE SCALE GENOMIC DNA]</scope>
    <source>
        <strain>C57BL/6J</strain>
    </source>
</reference>
<reference key="3">
    <citation type="journal article" date="2004" name="Genome Res.">
        <title>The status, quality, and expansion of the NIH full-length cDNA project: the Mammalian Gene Collection (MGC).</title>
        <authorList>
            <consortium name="The MGC Project Team"/>
        </authorList>
    </citation>
    <scope>NUCLEOTIDE SEQUENCE [LARGE SCALE MRNA]</scope>
    <source>
        <tissue>Brain</tissue>
    </source>
</reference>
<reference key="4">
    <citation type="journal article" date="2002" name="J. Biol. Chem.">
        <title>Interaction of POB1, a downstream molecule of small G protein Ral, with PAG2, a paxillin-binding protein, is involved in cell migration.</title>
        <authorList>
            <person name="Oshiro T."/>
            <person name="Koyama S."/>
            <person name="Sugiyama S."/>
            <person name="Kondo A."/>
            <person name="Onodera Y."/>
            <person name="Asahara T."/>
            <person name="Sabe H."/>
            <person name="Kikuchi A."/>
        </authorList>
    </citation>
    <scope>INTERACTION WITH ASAP1</scope>
</reference>
<reference key="5">
    <citation type="journal article" date="2007" name="Proc. Natl. Acad. Sci. U.S.A.">
        <title>Large-scale phosphorylation analysis of mouse liver.</title>
        <authorList>
            <person name="Villen J."/>
            <person name="Beausoleil S.A."/>
            <person name="Gerber S.A."/>
            <person name="Gygi S.P."/>
        </authorList>
    </citation>
    <scope>IDENTIFICATION BY MASS SPECTROMETRY [LARGE SCALE ANALYSIS]</scope>
    <source>
        <tissue>Liver</tissue>
    </source>
</reference>
<reference key="6">
    <citation type="journal article" date="2010" name="Cell">
        <title>A tissue-specific atlas of mouse protein phosphorylation and expression.</title>
        <authorList>
            <person name="Huttlin E.L."/>
            <person name="Jedrychowski M.P."/>
            <person name="Elias J.E."/>
            <person name="Goswami T."/>
            <person name="Rad R."/>
            <person name="Beausoleil S.A."/>
            <person name="Villen J."/>
            <person name="Haas W."/>
            <person name="Sowa M.E."/>
            <person name="Gygi S.P."/>
        </authorList>
    </citation>
    <scope>IDENTIFICATION BY MASS SPECTROMETRY [LARGE SCALE ANALYSIS]</scope>
    <source>
        <tissue>Brain</tissue>
        <tissue>Brown adipose tissue</tissue>
        <tissue>Heart</tissue>
        <tissue>Kidney</tissue>
        <tissue>Liver</tissue>
        <tissue>Lung</tissue>
        <tissue>Spleen</tissue>
        <tissue>Testis</tissue>
    </source>
</reference>
<name>REPS2_MOUSE</name>
<proteinExistence type="evidence at protein level"/>
<dbReference type="EMBL" id="AY263368">
    <property type="protein sequence ID" value="AAO92604.1"/>
    <property type="molecule type" value="mRNA"/>
</dbReference>
<dbReference type="EMBL" id="AL672039">
    <property type="status" value="NOT_ANNOTATED_CDS"/>
    <property type="molecule type" value="Genomic_DNA"/>
</dbReference>
<dbReference type="EMBL" id="AL672123">
    <property type="status" value="NOT_ANNOTATED_CDS"/>
    <property type="molecule type" value="Genomic_DNA"/>
</dbReference>
<dbReference type="EMBL" id="AL672125">
    <property type="status" value="NOT_ANNOTATED_CDS"/>
    <property type="molecule type" value="Genomic_DNA"/>
</dbReference>
<dbReference type="EMBL" id="AL844872">
    <property type="status" value="NOT_ANNOTATED_CDS"/>
    <property type="molecule type" value="Genomic_DNA"/>
</dbReference>
<dbReference type="EMBL" id="BC145500">
    <property type="protein sequence ID" value="AAI45501.1"/>
    <property type="molecule type" value="mRNA"/>
</dbReference>
<dbReference type="CCDS" id="CCDS72462.1"/>
<dbReference type="RefSeq" id="NP_001277562.1">
    <property type="nucleotide sequence ID" value="NM_001290633.2"/>
</dbReference>
<dbReference type="RefSeq" id="NP_839987.2">
    <property type="nucleotide sequence ID" value="NM_178256.4"/>
</dbReference>
<dbReference type="RefSeq" id="XP_006528825.1">
    <property type="nucleotide sequence ID" value="XM_006528762.3"/>
</dbReference>
<dbReference type="SMR" id="Q80XA6"/>
<dbReference type="BioGRID" id="228794">
    <property type="interactions" value="9"/>
</dbReference>
<dbReference type="FunCoup" id="Q80XA6">
    <property type="interactions" value="902"/>
</dbReference>
<dbReference type="STRING" id="10090.ENSMUSP00000098661"/>
<dbReference type="GlyGen" id="Q80XA6">
    <property type="glycosylation" value="3 sites, 1 N-linked glycan (1 site)"/>
</dbReference>
<dbReference type="iPTMnet" id="Q80XA6"/>
<dbReference type="PhosphoSitePlus" id="Q80XA6"/>
<dbReference type="jPOST" id="Q80XA6"/>
<dbReference type="PaxDb" id="10090-ENSMUSP00000098661"/>
<dbReference type="PeptideAtlas" id="Q80XA6"/>
<dbReference type="ProteomicsDB" id="253114"/>
<dbReference type="ProteomicsDB" id="332930"/>
<dbReference type="Antibodypedia" id="434">
    <property type="antibodies" value="113 antibodies from 26 providers"/>
</dbReference>
<dbReference type="Ensembl" id="ENSMUST00000112334.8">
    <property type="protein sequence ID" value="ENSMUSP00000107953.2"/>
    <property type="gene ID" value="ENSMUSG00000040855.16"/>
</dbReference>
<dbReference type="GeneID" id="194590"/>
<dbReference type="KEGG" id="mmu:194590"/>
<dbReference type="UCSC" id="uc012hri.2">
    <property type="organism name" value="mouse"/>
</dbReference>
<dbReference type="AGR" id="MGI:2663511"/>
<dbReference type="CTD" id="9185"/>
<dbReference type="MGI" id="MGI:2663511">
    <property type="gene designation" value="Reps2"/>
</dbReference>
<dbReference type="VEuPathDB" id="HostDB:ENSMUSG00000040855"/>
<dbReference type="eggNOG" id="KOG1955">
    <property type="taxonomic scope" value="Eukaryota"/>
</dbReference>
<dbReference type="GeneTree" id="ENSGT00940000158080"/>
<dbReference type="InParanoid" id="Q80XA6"/>
<dbReference type="OrthoDB" id="10045710at2759"/>
<dbReference type="Reactome" id="R-MMU-8856825">
    <property type="pathway name" value="Cargo recognition for clathrin-mediated endocytosis"/>
</dbReference>
<dbReference type="Reactome" id="R-MMU-8856828">
    <property type="pathway name" value="Clathrin-mediated endocytosis"/>
</dbReference>
<dbReference type="BioGRID-ORCS" id="194590">
    <property type="hits" value="3 hits in 75 CRISPR screens"/>
</dbReference>
<dbReference type="ChiTaRS" id="Reps2">
    <property type="organism name" value="mouse"/>
</dbReference>
<dbReference type="PRO" id="PR:Q80XA6"/>
<dbReference type="Proteomes" id="UP000000589">
    <property type="component" value="Chromosome X"/>
</dbReference>
<dbReference type="RNAct" id="Q80XA6">
    <property type="molecule type" value="protein"/>
</dbReference>
<dbReference type="Bgee" id="ENSMUSG00000040855">
    <property type="expression patterns" value="Expressed in medial dorsal nucleus of thalamus and 180 other cell types or tissues"/>
</dbReference>
<dbReference type="GO" id="GO:0005737">
    <property type="term" value="C:cytoplasm"/>
    <property type="evidence" value="ECO:0007669"/>
    <property type="project" value="UniProtKB-SubCell"/>
</dbReference>
<dbReference type="GO" id="GO:0005509">
    <property type="term" value="F:calcium ion binding"/>
    <property type="evidence" value="ECO:0007669"/>
    <property type="project" value="InterPro"/>
</dbReference>
<dbReference type="CDD" id="cd00052">
    <property type="entry name" value="EH"/>
    <property type="match status" value="1"/>
</dbReference>
<dbReference type="FunFam" id="1.10.238.10:FF:000039">
    <property type="entry name" value="RalBP1-associated Eps domain-containing protein 2 isoform 1"/>
    <property type="match status" value="1"/>
</dbReference>
<dbReference type="Gene3D" id="1.10.238.10">
    <property type="entry name" value="EF-hand"/>
    <property type="match status" value="2"/>
</dbReference>
<dbReference type="InterPro" id="IPR011992">
    <property type="entry name" value="EF-hand-dom_pair"/>
</dbReference>
<dbReference type="InterPro" id="IPR018247">
    <property type="entry name" value="EF_Hand_1_Ca_BS"/>
</dbReference>
<dbReference type="InterPro" id="IPR002048">
    <property type="entry name" value="EF_hand_dom"/>
</dbReference>
<dbReference type="InterPro" id="IPR000261">
    <property type="entry name" value="EH_dom"/>
</dbReference>
<dbReference type="PANTHER" id="PTHR11216">
    <property type="entry name" value="EH DOMAIN"/>
    <property type="match status" value="1"/>
</dbReference>
<dbReference type="PANTHER" id="PTHR11216:SF64">
    <property type="entry name" value="RALBP1-ASSOCIATED EPS DOMAIN-CONTAINING PROTEIN 2"/>
    <property type="match status" value="1"/>
</dbReference>
<dbReference type="Pfam" id="PF12763">
    <property type="entry name" value="EH"/>
    <property type="match status" value="1"/>
</dbReference>
<dbReference type="SMART" id="SM00027">
    <property type="entry name" value="EH"/>
    <property type="match status" value="1"/>
</dbReference>
<dbReference type="SUPFAM" id="SSF47473">
    <property type="entry name" value="EF-hand"/>
    <property type="match status" value="2"/>
</dbReference>
<dbReference type="PROSITE" id="PS00018">
    <property type="entry name" value="EF_HAND_1"/>
    <property type="match status" value="1"/>
</dbReference>
<dbReference type="PROSITE" id="PS50222">
    <property type="entry name" value="EF_HAND_2"/>
    <property type="match status" value="1"/>
</dbReference>
<dbReference type="PROSITE" id="PS50031">
    <property type="entry name" value="EH"/>
    <property type="match status" value="2"/>
</dbReference>
<protein>
    <recommendedName>
        <fullName>RalBP1-associated Eps domain-containing protein 2</fullName>
    </recommendedName>
    <alternativeName>
        <fullName>Partner of RalBP1</fullName>
    </alternativeName>
    <alternativeName>
        <fullName>RalBP1-interacting protein 2</fullName>
    </alternativeName>
</protein>
<evidence type="ECO:0000250" key="1">
    <source>
        <dbReference type="UniProtKB" id="Q8NFH8"/>
    </source>
</evidence>
<evidence type="ECO:0000255" key="2"/>
<evidence type="ECO:0000255" key="3">
    <source>
        <dbReference type="PROSITE-ProRule" id="PRU00077"/>
    </source>
</evidence>
<evidence type="ECO:0000255" key="4">
    <source>
        <dbReference type="PROSITE-ProRule" id="PRU00448"/>
    </source>
</evidence>
<evidence type="ECO:0000256" key="5">
    <source>
        <dbReference type="SAM" id="MobiDB-lite"/>
    </source>
</evidence>
<evidence type="ECO:0000269" key="6">
    <source>
    </source>
</evidence>
<gene>
    <name type="primary">Reps2</name>
    <name type="synonym">Pob1</name>
</gene>
<accession>Q80XA6</accession>
<accession>A2AFI8</accession>
<feature type="chain" id="PRO_0000073832" description="RalBP1-associated Eps domain-containing protein 2">
    <location>
        <begin position="1"/>
        <end position="647"/>
    </location>
</feature>
<feature type="domain" description="EH 1" evidence="3">
    <location>
        <begin position="21"/>
        <end position="122"/>
    </location>
</feature>
<feature type="domain" description="EH 2" evidence="3">
    <location>
        <begin position="268"/>
        <end position="359"/>
    </location>
</feature>
<feature type="domain" description="EF-hand" evidence="4">
    <location>
        <begin position="301"/>
        <end position="336"/>
    </location>
</feature>
<feature type="region of interest" description="Disordered" evidence="5">
    <location>
        <begin position="156"/>
        <end position="233"/>
    </location>
</feature>
<feature type="region of interest" description="Disordered" evidence="5">
    <location>
        <begin position="402"/>
        <end position="478"/>
    </location>
</feature>
<feature type="region of interest" description="Disordered" evidence="5">
    <location>
        <begin position="492"/>
        <end position="568"/>
    </location>
</feature>
<feature type="region of interest" description="Interaction with RALBP1" evidence="1">
    <location>
        <begin position="501"/>
        <end position="647"/>
    </location>
</feature>
<feature type="region of interest" description="Interaction with ASAP1" evidence="1">
    <location>
        <begin position="548"/>
        <end position="647"/>
    </location>
</feature>
<feature type="coiled-coil region" evidence="2">
    <location>
        <begin position="599"/>
        <end position="640"/>
    </location>
</feature>
<feature type="compositionally biased region" description="Basic and acidic residues" evidence="5">
    <location>
        <begin position="158"/>
        <end position="170"/>
    </location>
</feature>
<feature type="compositionally biased region" description="Low complexity" evidence="5">
    <location>
        <begin position="221"/>
        <end position="230"/>
    </location>
</feature>
<feature type="compositionally biased region" description="Pro residues" evidence="5">
    <location>
        <begin position="499"/>
        <end position="510"/>
    </location>
</feature>
<feature type="compositionally biased region" description="Polar residues" evidence="5">
    <location>
        <begin position="524"/>
        <end position="539"/>
    </location>
</feature>
<feature type="binding site" evidence="4">
    <location>
        <position position="314"/>
    </location>
    <ligand>
        <name>Ca(2+)</name>
        <dbReference type="ChEBI" id="CHEBI:29108"/>
    </ligand>
</feature>
<feature type="binding site" evidence="4">
    <location>
        <position position="316"/>
    </location>
    <ligand>
        <name>Ca(2+)</name>
        <dbReference type="ChEBI" id="CHEBI:29108"/>
    </ligand>
</feature>
<feature type="binding site" evidence="4">
    <location>
        <position position="318"/>
    </location>
    <ligand>
        <name>Ca(2+)</name>
        <dbReference type="ChEBI" id="CHEBI:29108"/>
    </ligand>
</feature>
<feature type="binding site" evidence="4">
    <location>
        <position position="325"/>
    </location>
    <ligand>
        <name>Ca(2+)</name>
        <dbReference type="ChEBI" id="CHEBI:29108"/>
    </ligand>
</feature>
<feature type="modified residue" description="Phosphoserine" evidence="1">
    <location>
        <position position="239"/>
    </location>
</feature>
<feature type="modified residue" description="Phosphothreonine" evidence="1">
    <location>
        <position position="466"/>
    </location>
</feature>
<feature type="modified residue" description="Phosphoserine" evidence="1">
    <location>
        <position position="480"/>
    </location>
</feature>